<dbReference type="EMBL" id="AE017126">
    <property type="protein sequence ID" value="AAQ00739.1"/>
    <property type="molecule type" value="Genomic_DNA"/>
</dbReference>
<dbReference type="RefSeq" id="NP_876086.1">
    <property type="nucleotide sequence ID" value="NC_005042.1"/>
</dbReference>
<dbReference type="RefSeq" id="WP_011125844.1">
    <property type="nucleotide sequence ID" value="NC_005042.1"/>
</dbReference>
<dbReference type="SMR" id="Q7V9X9"/>
<dbReference type="STRING" id="167539.Pro_1695"/>
<dbReference type="EnsemblBacteria" id="AAQ00739">
    <property type="protein sequence ID" value="AAQ00739"/>
    <property type="gene ID" value="Pro_1695"/>
</dbReference>
<dbReference type="KEGG" id="pma:Pro_1695"/>
<dbReference type="PATRIC" id="fig|167539.5.peg.1790"/>
<dbReference type="eggNOG" id="COG0200">
    <property type="taxonomic scope" value="Bacteria"/>
</dbReference>
<dbReference type="HOGENOM" id="CLU_055188_4_2_3"/>
<dbReference type="OrthoDB" id="9810293at2"/>
<dbReference type="Proteomes" id="UP000001420">
    <property type="component" value="Chromosome"/>
</dbReference>
<dbReference type="GO" id="GO:0022625">
    <property type="term" value="C:cytosolic large ribosomal subunit"/>
    <property type="evidence" value="ECO:0007669"/>
    <property type="project" value="TreeGrafter"/>
</dbReference>
<dbReference type="GO" id="GO:0019843">
    <property type="term" value="F:rRNA binding"/>
    <property type="evidence" value="ECO:0007669"/>
    <property type="project" value="UniProtKB-UniRule"/>
</dbReference>
<dbReference type="GO" id="GO:0003735">
    <property type="term" value="F:structural constituent of ribosome"/>
    <property type="evidence" value="ECO:0007669"/>
    <property type="project" value="InterPro"/>
</dbReference>
<dbReference type="GO" id="GO:0006412">
    <property type="term" value="P:translation"/>
    <property type="evidence" value="ECO:0007669"/>
    <property type="project" value="UniProtKB-UniRule"/>
</dbReference>
<dbReference type="Gene3D" id="3.100.10.10">
    <property type="match status" value="1"/>
</dbReference>
<dbReference type="HAMAP" id="MF_01341">
    <property type="entry name" value="Ribosomal_uL15"/>
    <property type="match status" value="1"/>
</dbReference>
<dbReference type="InterPro" id="IPR030878">
    <property type="entry name" value="Ribosomal_uL15"/>
</dbReference>
<dbReference type="InterPro" id="IPR021131">
    <property type="entry name" value="Ribosomal_uL15/eL18"/>
</dbReference>
<dbReference type="InterPro" id="IPR036227">
    <property type="entry name" value="Ribosomal_uL15/eL18_sf"/>
</dbReference>
<dbReference type="InterPro" id="IPR005749">
    <property type="entry name" value="Ribosomal_uL15_bac-type"/>
</dbReference>
<dbReference type="InterPro" id="IPR001196">
    <property type="entry name" value="Ribosomal_uL15_CS"/>
</dbReference>
<dbReference type="NCBIfam" id="TIGR01071">
    <property type="entry name" value="rplO_bact"/>
    <property type="match status" value="1"/>
</dbReference>
<dbReference type="PANTHER" id="PTHR12934">
    <property type="entry name" value="50S RIBOSOMAL PROTEIN L15"/>
    <property type="match status" value="1"/>
</dbReference>
<dbReference type="PANTHER" id="PTHR12934:SF11">
    <property type="entry name" value="LARGE RIBOSOMAL SUBUNIT PROTEIN UL15M"/>
    <property type="match status" value="1"/>
</dbReference>
<dbReference type="Pfam" id="PF00828">
    <property type="entry name" value="Ribosomal_L27A"/>
    <property type="match status" value="1"/>
</dbReference>
<dbReference type="SUPFAM" id="SSF52080">
    <property type="entry name" value="Ribosomal proteins L15p and L18e"/>
    <property type="match status" value="1"/>
</dbReference>
<dbReference type="PROSITE" id="PS00475">
    <property type="entry name" value="RIBOSOMAL_L15"/>
    <property type="match status" value="1"/>
</dbReference>
<protein>
    <recommendedName>
        <fullName evidence="1">Large ribosomal subunit protein uL15</fullName>
    </recommendedName>
    <alternativeName>
        <fullName evidence="3">50S ribosomal protein L15</fullName>
    </alternativeName>
</protein>
<name>RL15_PROMA</name>
<feature type="chain" id="PRO_0000104779" description="Large ribosomal subunit protein uL15">
    <location>
        <begin position="1"/>
        <end position="151"/>
    </location>
</feature>
<feature type="region of interest" description="Disordered" evidence="2">
    <location>
        <begin position="1"/>
        <end position="58"/>
    </location>
</feature>
<feature type="compositionally biased region" description="Basic residues" evidence="2">
    <location>
        <begin position="13"/>
        <end position="24"/>
    </location>
</feature>
<feature type="compositionally biased region" description="Gly residues" evidence="2">
    <location>
        <begin position="26"/>
        <end position="38"/>
    </location>
</feature>
<reference key="1">
    <citation type="journal article" date="2003" name="Proc. Natl. Acad. Sci. U.S.A.">
        <title>Genome sequence of the cyanobacterium Prochlorococcus marinus SS120, a nearly minimal oxyphototrophic genome.</title>
        <authorList>
            <person name="Dufresne A."/>
            <person name="Salanoubat M."/>
            <person name="Partensky F."/>
            <person name="Artiguenave F."/>
            <person name="Axmann I.M."/>
            <person name="Barbe V."/>
            <person name="Duprat S."/>
            <person name="Galperin M.Y."/>
            <person name="Koonin E.V."/>
            <person name="Le Gall F."/>
            <person name="Makarova K.S."/>
            <person name="Ostrowski M."/>
            <person name="Oztas S."/>
            <person name="Robert C."/>
            <person name="Rogozin I.B."/>
            <person name="Scanlan D.J."/>
            <person name="Tandeau de Marsac N."/>
            <person name="Weissenbach J."/>
            <person name="Wincker P."/>
            <person name="Wolf Y.I."/>
            <person name="Hess W.R."/>
        </authorList>
    </citation>
    <scope>NUCLEOTIDE SEQUENCE [LARGE SCALE GENOMIC DNA]</scope>
    <source>
        <strain>SARG / CCMP1375 / SS120</strain>
    </source>
</reference>
<proteinExistence type="inferred from homology"/>
<gene>
    <name evidence="1" type="primary">rplO</name>
    <name type="synonym">rpl15</name>
    <name type="ordered locus">Pro_1695</name>
</gene>
<keyword id="KW-1185">Reference proteome</keyword>
<keyword id="KW-0687">Ribonucleoprotein</keyword>
<keyword id="KW-0689">Ribosomal protein</keyword>
<keyword id="KW-0694">RNA-binding</keyword>
<keyword id="KW-0699">rRNA-binding</keyword>
<evidence type="ECO:0000255" key="1">
    <source>
        <dbReference type="HAMAP-Rule" id="MF_01341"/>
    </source>
</evidence>
<evidence type="ECO:0000256" key="2">
    <source>
        <dbReference type="SAM" id="MobiDB-lite"/>
    </source>
</evidence>
<evidence type="ECO:0000305" key="3"/>
<sequence>MTSISLDSLKPNKGARKRKTRKGRGIAAGQGASCGFGMRGQKSRSGRPTRPGFEGGQMPLYRRVPKLKHFPLVNSKSFTLINVASLNSLKEGSTVNLDSLVKTGIVTSPKYPLKVLGNGNLKVKLVVQAAAFTASAKTKIEGAGGSCEVFE</sequence>
<accession>Q7V9X9</accession>
<comment type="function">
    <text evidence="1">Binds to the 23S rRNA.</text>
</comment>
<comment type="subunit">
    <text evidence="1">Part of the 50S ribosomal subunit.</text>
</comment>
<comment type="similarity">
    <text evidence="1">Belongs to the universal ribosomal protein uL15 family.</text>
</comment>
<organism>
    <name type="scientific">Prochlorococcus marinus (strain SARG / CCMP1375 / SS120)</name>
    <dbReference type="NCBI Taxonomy" id="167539"/>
    <lineage>
        <taxon>Bacteria</taxon>
        <taxon>Bacillati</taxon>
        <taxon>Cyanobacteriota</taxon>
        <taxon>Cyanophyceae</taxon>
        <taxon>Synechococcales</taxon>
        <taxon>Prochlorococcaceae</taxon>
        <taxon>Prochlorococcus</taxon>
    </lineage>
</organism>